<proteinExistence type="inferred from homology"/>
<gene>
    <name type="primary">wzzB</name>
    <name type="synonym">cld</name>
    <name type="synonym">rol</name>
</gene>
<feature type="chain" id="PRO_0000065991" description="Chain length determinant protein">
    <location>
        <begin position="1"/>
        <end position="327"/>
    </location>
</feature>
<feature type="topological domain" description="Cytoplasmic" evidence="1">
    <location>
        <begin position="1"/>
        <end position="31"/>
    </location>
</feature>
<feature type="transmembrane region" description="Helical" evidence="1">
    <location>
        <begin position="32"/>
        <end position="52"/>
    </location>
</feature>
<feature type="topological domain" description="Periplasmic" evidence="1">
    <location>
        <begin position="53"/>
        <end position="294"/>
    </location>
</feature>
<feature type="transmembrane region" description="Helical" evidence="1">
    <location>
        <begin position="295"/>
        <end position="315"/>
    </location>
</feature>
<feature type="topological domain" description="Cytoplasmic" evidence="1">
    <location>
        <begin position="316"/>
        <end position="327"/>
    </location>
</feature>
<organism>
    <name type="scientific">Escherichia coli O111:H-</name>
    <dbReference type="NCBI Taxonomy" id="168927"/>
    <lineage>
        <taxon>Bacteria</taxon>
        <taxon>Pseudomonadati</taxon>
        <taxon>Pseudomonadota</taxon>
        <taxon>Gammaproteobacteria</taxon>
        <taxon>Enterobacterales</taxon>
        <taxon>Enterobacteriaceae</taxon>
        <taxon>Escherichia</taxon>
    </lineage>
</organism>
<accession>Q05032</accession>
<comment type="function">
    <text>Confers a modal distribution of chain length on the O-antigen component of lipopolysaccharide (LPS). Gives rise to a reduced number of short chain molecules and increases in numbers of longer molecules, with a modal value of 13 (in strain O111/M92) and of 17 (in strain K12).</text>
</comment>
<comment type="pathway">
    <text>Bacterial outer membrane biogenesis; lipopolysaccharide biosynthesis.</text>
</comment>
<comment type="subcellular location">
    <subcellularLocation>
        <location>Cell inner membrane</location>
        <topology>Multi-pass membrane protein</topology>
    </subcellularLocation>
</comment>
<comment type="similarity">
    <text evidence="2">Belongs to the WzzB/Cld/Rol family.</text>
</comment>
<reference key="1">
    <citation type="journal article" date="1993" name="Mol. Microbiol.">
        <title>Repeat unit polysaccharides of bacteria: a model for polymerization resembling that of ribosomes and fatty acid synthetase, with a novel mechanism for determining chain length.</title>
        <authorList>
            <person name="Bastin D.A."/>
            <person name="Stevenson G."/>
            <person name="Brown P.K."/>
            <person name="Haase A."/>
            <person name="Reeves P.R."/>
        </authorList>
    </citation>
    <scope>NUCLEOTIDE SEQUENCE [GENOMIC DNA]</scope>
    <source>
        <strain>O111:H- / M92 / EPEC</strain>
    </source>
</reference>
<keyword id="KW-0997">Cell inner membrane</keyword>
<keyword id="KW-1003">Cell membrane</keyword>
<keyword id="KW-0448">Lipopolysaccharide biosynthesis</keyword>
<keyword id="KW-0472">Membrane</keyword>
<keyword id="KW-0812">Transmembrane</keyword>
<keyword id="KW-1133">Transmembrane helix</keyword>
<name>WZZB_ECO11</name>
<evidence type="ECO:0000255" key="1"/>
<evidence type="ECO:0000305" key="2"/>
<sequence>MSISDNNMSGRSHDPEQIDLIDLLMQLWRGKVTIIICIVVAIALAVGYLAVAKEKWTSIAIVTQPDAGQLASYNNAMDVLFGANAPEMTDVQAGFIGRFSSAFSALAETLDNQQEPEKLSIDAAVKGQTLPLKVSYTGKTSEEAQKTLAQYIQQVDEGVAKELNADLSMSMETRLADLQKSLAAQEAVAKEQKTLRIAQMTQALKVAQQSNIKLPQVQQVDQVSQDSMFMLGSEALSSMVENEATRPLTFSDQYYQTRQNLLEVQALEVAPDSVHAYRYVMKPTLPIRRDSPKKAITLVLAVLIGGMIGAGVVLGRNALRGYKAKAE</sequence>
<dbReference type="EMBL" id="Z17241">
    <property type="protein sequence ID" value="CAA78941.1"/>
    <property type="molecule type" value="Genomic_DNA"/>
</dbReference>
<dbReference type="PIR" id="S33670">
    <property type="entry name" value="S33670"/>
</dbReference>
<dbReference type="RefSeq" id="WP_000027959.1">
    <property type="nucleotide sequence ID" value="NZ_QMIB01000002.1"/>
</dbReference>
<dbReference type="SMR" id="Q05032"/>
<dbReference type="OMA" id="IIAKLWR"/>
<dbReference type="UniPathway" id="UPA00030"/>
<dbReference type="GO" id="GO:0005886">
    <property type="term" value="C:plasma membrane"/>
    <property type="evidence" value="ECO:0007669"/>
    <property type="project" value="UniProtKB-SubCell"/>
</dbReference>
<dbReference type="GO" id="GO:0004713">
    <property type="term" value="F:protein tyrosine kinase activity"/>
    <property type="evidence" value="ECO:0007669"/>
    <property type="project" value="TreeGrafter"/>
</dbReference>
<dbReference type="GO" id="GO:0009103">
    <property type="term" value="P:lipopolysaccharide biosynthetic process"/>
    <property type="evidence" value="ECO:0007669"/>
    <property type="project" value="UniProtKB-UniPathway"/>
</dbReference>
<dbReference type="Gene3D" id="3.30.1890.10">
    <property type="entry name" value="FepE-like"/>
    <property type="match status" value="1"/>
</dbReference>
<dbReference type="InterPro" id="IPR050445">
    <property type="entry name" value="Bact_polysacc_biosynth/exp"/>
</dbReference>
<dbReference type="InterPro" id="IPR003856">
    <property type="entry name" value="LPS_length_determ_N_term"/>
</dbReference>
<dbReference type="NCBIfam" id="NF012015">
    <property type="entry name" value="PRK15471.1"/>
    <property type="match status" value="1"/>
</dbReference>
<dbReference type="PANTHER" id="PTHR32309:SF29">
    <property type="entry name" value="CHAIN LENGTH DETERMINANT PROTEIN"/>
    <property type="match status" value="1"/>
</dbReference>
<dbReference type="PANTHER" id="PTHR32309">
    <property type="entry name" value="TYROSINE-PROTEIN KINASE"/>
    <property type="match status" value="1"/>
</dbReference>
<dbReference type="Pfam" id="PF02706">
    <property type="entry name" value="Wzz"/>
    <property type="match status" value="1"/>
</dbReference>
<dbReference type="SUPFAM" id="SSF160355">
    <property type="entry name" value="Bacterial polysaccharide co-polymerase-like"/>
    <property type="match status" value="1"/>
</dbReference>
<protein>
    <recommendedName>
        <fullName>Chain length determinant protein</fullName>
    </recommendedName>
    <alternativeName>
        <fullName>Polysaccharide antigen chain regulator</fullName>
    </alternativeName>
</protein>